<reference key="1">
    <citation type="journal article" date="2011" name="Genome Biol.">
        <title>Comparative and functional genomics provide insights into the pathogenicity of dermatophytic fungi.</title>
        <authorList>
            <person name="Burmester A."/>
            <person name="Shelest E."/>
            <person name="Gloeckner G."/>
            <person name="Heddergott C."/>
            <person name="Schindler S."/>
            <person name="Staib P."/>
            <person name="Heidel A."/>
            <person name="Felder M."/>
            <person name="Petzold A."/>
            <person name="Szafranski K."/>
            <person name="Feuermann M."/>
            <person name="Pedruzzi I."/>
            <person name="Priebe S."/>
            <person name="Groth M."/>
            <person name="Winkler R."/>
            <person name="Li W."/>
            <person name="Kniemeyer O."/>
            <person name="Schroeckh V."/>
            <person name="Hertweck C."/>
            <person name="Hube B."/>
            <person name="White T.C."/>
            <person name="Platzer M."/>
            <person name="Guthke R."/>
            <person name="Heitman J."/>
            <person name="Woestemeyer J."/>
            <person name="Zipfel P.F."/>
            <person name="Monod M."/>
            <person name="Brakhage A.A."/>
        </authorList>
    </citation>
    <scope>NUCLEOTIDE SEQUENCE [LARGE SCALE GENOMIC DNA]</scope>
    <source>
        <strain>ATCC MYA-4681 / CBS 112371</strain>
    </source>
</reference>
<feature type="signal peptide" evidence="2">
    <location>
        <begin position="1"/>
        <end position="22"/>
    </location>
</feature>
<feature type="chain" id="PRO_0000434478" description="Lipase A">
    <location>
        <begin position="23"/>
        <end position="469"/>
    </location>
</feature>
<feature type="region of interest" description="Disordered" evidence="4">
    <location>
        <begin position="40"/>
        <end position="59"/>
    </location>
</feature>
<feature type="compositionally biased region" description="Pro residues" evidence="4">
    <location>
        <begin position="40"/>
        <end position="51"/>
    </location>
</feature>
<feature type="active site" description="Charge relay system" evidence="1">
    <location>
        <position position="217"/>
    </location>
</feature>
<feature type="active site" description="Charge relay system" evidence="1">
    <location>
        <position position="361"/>
    </location>
</feature>
<feature type="active site" description="Charge relay system" evidence="1">
    <location>
        <position position="393"/>
    </location>
</feature>
<feature type="glycosylation site" description="N-linked (GlcNAc...) asparagine" evidence="3">
    <location>
        <position position="111"/>
    </location>
</feature>
<feature type="disulfide bond" evidence="1">
    <location>
        <begin position="129"/>
        <end position="304"/>
    </location>
</feature>
<feature type="disulfide bond" evidence="1">
    <location>
        <begin position="377"/>
        <end position="421"/>
    </location>
</feature>
<gene>
    <name type="ORF">ARB_00790</name>
</gene>
<protein>
    <recommendedName>
        <fullName evidence="1">Lipase A</fullName>
        <ecNumber evidence="1">3.1.1.3</ecNumber>
    </recommendedName>
</protein>
<organism>
    <name type="scientific">Arthroderma benhamiae (strain ATCC MYA-4681 / CBS 112371)</name>
    <name type="common">Trichophyton mentagrophytes</name>
    <dbReference type="NCBI Taxonomy" id="663331"/>
    <lineage>
        <taxon>Eukaryota</taxon>
        <taxon>Fungi</taxon>
        <taxon>Dikarya</taxon>
        <taxon>Ascomycota</taxon>
        <taxon>Pezizomycotina</taxon>
        <taxon>Eurotiomycetes</taxon>
        <taxon>Eurotiomycetidae</taxon>
        <taxon>Onygenales</taxon>
        <taxon>Arthrodermataceae</taxon>
        <taxon>Trichophyton</taxon>
    </lineage>
</organism>
<name>LIPA_ARTBC</name>
<dbReference type="EC" id="3.1.1.3" evidence="1"/>
<dbReference type="EMBL" id="ABSU01000016">
    <property type="protein sequence ID" value="EFE32268.1"/>
    <property type="molecule type" value="Genomic_DNA"/>
</dbReference>
<dbReference type="RefSeq" id="XP_003012908.1">
    <property type="nucleotide sequence ID" value="XM_003012862.1"/>
</dbReference>
<dbReference type="SMR" id="D4AX63"/>
<dbReference type="ESTHER" id="artbc-d4ax63">
    <property type="family name" value="Fungal-Bact_LIP"/>
</dbReference>
<dbReference type="GeneID" id="9522986"/>
<dbReference type="KEGG" id="abe:ARB_00790"/>
<dbReference type="eggNOG" id="ENOG502S2P7">
    <property type="taxonomic scope" value="Eukaryota"/>
</dbReference>
<dbReference type="HOGENOM" id="CLU_029538_5_0_1"/>
<dbReference type="OMA" id="RQYCATG"/>
<dbReference type="OrthoDB" id="2373480at2759"/>
<dbReference type="Proteomes" id="UP000008866">
    <property type="component" value="Unassembled WGS sequence"/>
</dbReference>
<dbReference type="GO" id="GO:0005576">
    <property type="term" value="C:extracellular region"/>
    <property type="evidence" value="ECO:0007669"/>
    <property type="project" value="UniProtKB-SubCell"/>
</dbReference>
<dbReference type="GO" id="GO:0004806">
    <property type="term" value="F:triacylglycerol lipase activity"/>
    <property type="evidence" value="ECO:0007669"/>
    <property type="project" value="UniProtKB-EC"/>
</dbReference>
<dbReference type="GO" id="GO:0016042">
    <property type="term" value="P:lipid catabolic process"/>
    <property type="evidence" value="ECO:0007669"/>
    <property type="project" value="UniProtKB-KW"/>
</dbReference>
<dbReference type="Gene3D" id="1.10.260.130">
    <property type="match status" value="1"/>
</dbReference>
<dbReference type="Gene3D" id="3.40.50.1820">
    <property type="entry name" value="alpha/beta hydrolase"/>
    <property type="match status" value="1"/>
</dbReference>
<dbReference type="InterPro" id="IPR029058">
    <property type="entry name" value="AB_hydrolase_fold"/>
</dbReference>
<dbReference type="InterPro" id="IPR005152">
    <property type="entry name" value="Lipase_secreted"/>
</dbReference>
<dbReference type="PANTHER" id="PTHR34853">
    <property type="match status" value="1"/>
</dbReference>
<dbReference type="PANTHER" id="PTHR34853:SF5">
    <property type="entry name" value="LIP-DOMAIN-CONTAINING PROTEIN-RELATED"/>
    <property type="match status" value="1"/>
</dbReference>
<dbReference type="Pfam" id="PF03583">
    <property type="entry name" value="LIP"/>
    <property type="match status" value="1"/>
</dbReference>
<dbReference type="PIRSF" id="PIRSF029171">
    <property type="entry name" value="Esterase_LipA"/>
    <property type="match status" value="1"/>
</dbReference>
<dbReference type="SUPFAM" id="SSF53474">
    <property type="entry name" value="alpha/beta-Hydrolases"/>
    <property type="match status" value="1"/>
</dbReference>
<proteinExistence type="inferred from homology"/>
<keyword id="KW-1015">Disulfide bond</keyword>
<keyword id="KW-0325">Glycoprotein</keyword>
<keyword id="KW-0378">Hydrolase</keyword>
<keyword id="KW-0442">Lipid degradation</keyword>
<keyword id="KW-0443">Lipid metabolism</keyword>
<keyword id="KW-1185">Reference proteome</keyword>
<keyword id="KW-0964">Secreted</keyword>
<keyword id="KW-0732">Signal</keyword>
<keyword id="KW-0843">Virulence</keyword>
<comment type="function">
    <text evidence="1">Hydrolyzes triglycerides, with a preference for substrates with short-chain lengths (C4 to C8).</text>
</comment>
<comment type="catalytic activity">
    <reaction evidence="1">
        <text>a triacylglycerol + H2O = a diacylglycerol + a fatty acid + H(+)</text>
        <dbReference type="Rhea" id="RHEA:12044"/>
        <dbReference type="ChEBI" id="CHEBI:15377"/>
        <dbReference type="ChEBI" id="CHEBI:15378"/>
        <dbReference type="ChEBI" id="CHEBI:17855"/>
        <dbReference type="ChEBI" id="CHEBI:18035"/>
        <dbReference type="ChEBI" id="CHEBI:28868"/>
        <dbReference type="EC" id="3.1.1.3"/>
    </reaction>
</comment>
<comment type="subunit">
    <text evidence="1">Monomer.</text>
</comment>
<comment type="subcellular location">
    <subcellularLocation>
        <location evidence="1">Secreted</location>
    </subcellularLocation>
</comment>
<comment type="similarity">
    <text evidence="5">Belongs to the AB hydrolase superfamily. Lipase family. Class Lip subfamily.</text>
</comment>
<accession>D4AX63</accession>
<evidence type="ECO:0000250" key="1">
    <source>
        <dbReference type="UniProtKB" id="W3VKA4"/>
    </source>
</evidence>
<evidence type="ECO:0000255" key="2"/>
<evidence type="ECO:0000255" key="3">
    <source>
        <dbReference type="PROSITE-ProRule" id="PRU00498"/>
    </source>
</evidence>
<evidence type="ECO:0000256" key="4">
    <source>
        <dbReference type="SAM" id="MobiDB-lite"/>
    </source>
</evidence>
<evidence type="ECO:0000305" key="5"/>
<sequence length="469" mass="50460">MMFLTQLVSALFLFFLGPISYGKPVETFVLPLAQDAPIPPSEDPFYQPPPGYEETEPGTVLRQRRPPFPISLFRSAPIDLAATYQVLYRSSDTFGQPTATVSTILIPHNANMSKVLSYQVVEDAAFINCAPSYALQLHSDPGGLFGTIIIQSELLLITAALENGWVVTIPDYEGPAAAFLAYWRAGYATLDGIRATLASSGFTGVDPDAAVGLWGTSGGSVASAFAADLHPKYAPELNIVGAALGGVVPSITTALHSLNKGFDAGIIVSGVIGLSKEYTYMQPILESYLVPHLRDKFMSAGKKCSGAVSLDFRMEDIFSYFKGGEESGLFADPRVKAILDHNAMPQGVPEIPILILKSVNDEISPISDTDALVEKYCSNGVTIDYKRDLLSVHTILAVTGAPEAVLWLRDRLDGITVEKGCKTSTIFMTLLQPGALEVMSKTIIDNLLNLLGKPVGPRLRTEIVHVPPL</sequence>